<proteinExistence type="evidence at protein level"/>
<organism>
    <name type="scientific">Homo sapiens</name>
    <name type="common">Human</name>
    <dbReference type="NCBI Taxonomy" id="9606"/>
    <lineage>
        <taxon>Eukaryota</taxon>
        <taxon>Metazoa</taxon>
        <taxon>Chordata</taxon>
        <taxon>Craniata</taxon>
        <taxon>Vertebrata</taxon>
        <taxon>Euteleostomi</taxon>
        <taxon>Mammalia</taxon>
        <taxon>Eutheria</taxon>
        <taxon>Euarchontoglires</taxon>
        <taxon>Primates</taxon>
        <taxon>Haplorrhini</taxon>
        <taxon>Catarrhini</taxon>
        <taxon>Hominidae</taxon>
        <taxon>Homo</taxon>
    </lineage>
</organism>
<evidence type="ECO:0000255" key="1"/>
<evidence type="ECO:0000269" key="2">
    <source>
    </source>
</evidence>
<evidence type="ECO:0000269" key="3">
    <source>
    </source>
</evidence>
<evidence type="ECO:0000305" key="4"/>
<gene>
    <name type="primary">TM4SF5</name>
</gene>
<feature type="chain" id="PRO_0000219303" description="Transmembrane 4 L6 family member 5">
    <location>
        <begin position="1"/>
        <end position="197"/>
    </location>
</feature>
<feature type="topological domain" description="Cytoplasmic" evidence="1">
    <location>
        <begin position="1"/>
        <end position="9"/>
    </location>
</feature>
<feature type="transmembrane region" description="Helical" evidence="1">
    <location>
        <begin position="10"/>
        <end position="30"/>
    </location>
</feature>
<feature type="topological domain" description="Extracellular" evidence="1">
    <location>
        <begin position="31"/>
        <end position="46"/>
    </location>
</feature>
<feature type="transmembrane region" description="Helical" evidence="1">
    <location>
        <begin position="47"/>
        <end position="67"/>
    </location>
</feature>
<feature type="topological domain" description="Cytoplasmic" evidence="1">
    <location>
        <begin position="68"/>
        <end position="90"/>
    </location>
</feature>
<feature type="transmembrane region" description="Helical" evidence="1">
    <location>
        <begin position="91"/>
        <end position="111"/>
    </location>
</feature>
<feature type="topological domain" description="Extracellular" evidence="1">
    <location>
        <begin position="112"/>
        <end position="157"/>
    </location>
</feature>
<feature type="transmembrane region" description="Helical" evidence="1">
    <location>
        <begin position="158"/>
        <end position="178"/>
    </location>
</feature>
<feature type="topological domain" description="Cytoplasmic" evidence="1">
    <location>
        <begin position="179"/>
        <end position="197"/>
    </location>
</feature>
<feature type="region of interest" description="Interaction with MTOR and CASTOR1" evidence="3">
    <location>
        <begin position="91"/>
        <end position="197"/>
    </location>
</feature>
<feature type="binding site" evidence="3">
    <location>
        <begin position="124"/>
        <end position="129"/>
    </location>
    <ligand>
        <name>L-arginine</name>
        <dbReference type="ChEBI" id="CHEBI:32682"/>
    </ligand>
</feature>
<feature type="glycosylation site" description="N-linked (GlcNAc...) asparagine" evidence="1">
    <location>
        <position position="138"/>
    </location>
</feature>
<feature type="glycosylation site" description="N-linked (GlcNAc...) asparagine" evidence="1">
    <location>
        <position position="155"/>
    </location>
</feature>
<feature type="mutagenesis site" description="Disrupts arginine-binding." evidence="3">
    <original>W</original>
    <variation>A</variation>
    <location>
        <position position="124"/>
    </location>
</feature>
<feature type="mutagenesis site" description="Disrupts arginine-binding." evidence="3">
    <original>G</original>
    <variation>A</variation>
    <location>
        <position position="125"/>
    </location>
</feature>
<feature type="mutagenesis site" description="Disrupts arginine-binding." evidence="3">
    <original>Y</original>
    <variation>S</variation>
    <location>
        <position position="126"/>
    </location>
</feature>
<feature type="mutagenesis site" description="Disrupts arginine-binding." evidence="3">
    <original>H</original>
    <variation>A</variation>
    <location>
        <position position="127"/>
    </location>
</feature>
<feature type="mutagenesis site" description="Disrupts arginine-binding." evidence="3">
    <original>F</original>
    <variation>S</variation>
    <location>
        <position position="128"/>
    </location>
</feature>
<feature type="mutagenesis site" description="Disrupts arginine-binding." evidence="3">
    <original>E</original>
    <variation>A</variation>
    <location>
        <position position="129"/>
    </location>
</feature>
<feature type="sequence conflict" description="In Ref. 1; AAB82947." evidence="4" ref="1">
    <original>L</original>
    <variation>F</variation>
    <location>
        <position position="19"/>
    </location>
</feature>
<dbReference type="EMBL" id="AF027204">
    <property type="protein sequence ID" value="AAB82947.1"/>
    <property type="molecule type" value="mRNA"/>
</dbReference>
<dbReference type="EMBL" id="CR456925">
    <property type="protein sequence ID" value="CAG33206.1"/>
    <property type="molecule type" value="mRNA"/>
</dbReference>
<dbReference type="EMBL" id="BC069519">
    <property type="protein sequence ID" value="AAH69519.1"/>
    <property type="molecule type" value="mRNA"/>
</dbReference>
<dbReference type="EMBL" id="BC093688">
    <property type="protein sequence ID" value="AAH93688.1"/>
    <property type="molecule type" value="mRNA"/>
</dbReference>
<dbReference type="EMBL" id="BC117163">
    <property type="protein sequence ID" value="AAI17164.1"/>
    <property type="molecule type" value="mRNA"/>
</dbReference>
<dbReference type="CCDS" id="CCDS11054.1"/>
<dbReference type="PIR" id="JC6544">
    <property type="entry name" value="JC6544"/>
</dbReference>
<dbReference type="RefSeq" id="NP_003954.2">
    <property type="nucleotide sequence ID" value="NM_003963.2"/>
</dbReference>
<dbReference type="BioGRID" id="114498">
    <property type="interactions" value="31"/>
</dbReference>
<dbReference type="CORUM" id="O14894"/>
<dbReference type="FunCoup" id="O14894">
    <property type="interactions" value="52"/>
</dbReference>
<dbReference type="IntAct" id="O14894">
    <property type="interactions" value="39"/>
</dbReference>
<dbReference type="STRING" id="9606.ENSP00000270560"/>
<dbReference type="ChEMBL" id="CHEMBL4523127"/>
<dbReference type="TCDB" id="8.A.75.1.5">
    <property type="family name" value="the transmembrane 4 l6 (tm4l6) family"/>
</dbReference>
<dbReference type="GlyCosmos" id="O14894">
    <property type="glycosylation" value="2 sites, No reported glycans"/>
</dbReference>
<dbReference type="GlyGen" id="O14894">
    <property type="glycosylation" value="2 sites"/>
</dbReference>
<dbReference type="BioMuta" id="TM4SF5"/>
<dbReference type="MassIVE" id="O14894"/>
<dbReference type="PaxDb" id="9606-ENSP00000270560"/>
<dbReference type="PeptideAtlas" id="O14894"/>
<dbReference type="ProteomicsDB" id="48285"/>
<dbReference type="ABCD" id="O14894">
    <property type="antibodies" value="3 sequenced antibodies"/>
</dbReference>
<dbReference type="Antibodypedia" id="51548">
    <property type="antibodies" value="62 antibodies from 10 providers"/>
</dbReference>
<dbReference type="DNASU" id="9032"/>
<dbReference type="Ensembl" id="ENST00000270560.4">
    <property type="protein sequence ID" value="ENSP00000270560.3"/>
    <property type="gene ID" value="ENSG00000142484.7"/>
</dbReference>
<dbReference type="GeneID" id="9032"/>
<dbReference type="KEGG" id="hsa:9032"/>
<dbReference type="MANE-Select" id="ENST00000270560.4">
    <property type="protein sequence ID" value="ENSP00000270560.3"/>
    <property type="RefSeq nucleotide sequence ID" value="NM_003963.3"/>
    <property type="RefSeq protein sequence ID" value="NP_003954.2"/>
</dbReference>
<dbReference type="UCSC" id="uc002fyw.1">
    <property type="organism name" value="human"/>
</dbReference>
<dbReference type="AGR" id="HGNC:11857"/>
<dbReference type="CTD" id="9032"/>
<dbReference type="DisGeNET" id="9032"/>
<dbReference type="GeneCards" id="TM4SF5"/>
<dbReference type="HGNC" id="HGNC:11857">
    <property type="gene designation" value="TM4SF5"/>
</dbReference>
<dbReference type="HPA" id="ENSG00000142484">
    <property type="expression patterns" value="Group enriched (intestine, liver)"/>
</dbReference>
<dbReference type="MIM" id="604657">
    <property type="type" value="gene"/>
</dbReference>
<dbReference type="neXtProt" id="NX_O14894"/>
<dbReference type="OpenTargets" id="ENSG00000142484"/>
<dbReference type="PharmGKB" id="PA36558"/>
<dbReference type="VEuPathDB" id="HostDB:ENSG00000142484"/>
<dbReference type="eggNOG" id="ENOG502RBE1">
    <property type="taxonomic scope" value="Eukaryota"/>
</dbReference>
<dbReference type="GeneTree" id="ENSGT01030000234590"/>
<dbReference type="HOGENOM" id="CLU_087168_1_0_1"/>
<dbReference type="InParanoid" id="O14894"/>
<dbReference type="OMA" id="MVLCGIQ"/>
<dbReference type="OrthoDB" id="9450608at2759"/>
<dbReference type="PAN-GO" id="O14894">
    <property type="GO annotations" value="1 GO annotation based on evolutionary models"/>
</dbReference>
<dbReference type="PhylomeDB" id="O14894"/>
<dbReference type="TreeFam" id="TF331371"/>
<dbReference type="PathwayCommons" id="O14894"/>
<dbReference type="SignaLink" id="O14894"/>
<dbReference type="BioGRID-ORCS" id="9032">
    <property type="hits" value="9 hits in 1138 CRISPR screens"/>
</dbReference>
<dbReference type="ChiTaRS" id="TM4SF5">
    <property type="organism name" value="human"/>
</dbReference>
<dbReference type="GeneWiki" id="TM4SF5"/>
<dbReference type="GenomeRNAi" id="9032"/>
<dbReference type="Pharos" id="O14894">
    <property type="development level" value="Tbio"/>
</dbReference>
<dbReference type="PRO" id="PR:O14894"/>
<dbReference type="Proteomes" id="UP000005640">
    <property type="component" value="Chromosome 17"/>
</dbReference>
<dbReference type="RNAct" id="O14894">
    <property type="molecule type" value="protein"/>
</dbReference>
<dbReference type="Bgee" id="ENSG00000142484">
    <property type="expression patterns" value="Expressed in jejunal mucosa and 60 other cell types or tissues"/>
</dbReference>
<dbReference type="GO" id="GO:0005765">
    <property type="term" value="C:lysosomal membrane"/>
    <property type="evidence" value="ECO:0000314"/>
    <property type="project" value="UniProtKB"/>
</dbReference>
<dbReference type="GO" id="GO:0016020">
    <property type="term" value="C:membrane"/>
    <property type="evidence" value="ECO:0000318"/>
    <property type="project" value="GO_Central"/>
</dbReference>
<dbReference type="GO" id="GO:0005886">
    <property type="term" value="C:plasma membrane"/>
    <property type="evidence" value="ECO:0000314"/>
    <property type="project" value="UniProtKB"/>
</dbReference>
<dbReference type="GO" id="GO:0034618">
    <property type="term" value="F:arginine binding"/>
    <property type="evidence" value="ECO:0000315"/>
    <property type="project" value="UniProtKB"/>
</dbReference>
<dbReference type="GO" id="GO:2000045">
    <property type="term" value="P:regulation of G1/S transition of mitotic cell cycle"/>
    <property type="evidence" value="ECO:0000314"/>
    <property type="project" value="UniProtKB"/>
</dbReference>
<dbReference type="InterPro" id="IPR008661">
    <property type="entry name" value="L6_membrane"/>
</dbReference>
<dbReference type="PANTHER" id="PTHR14198">
    <property type="entry name" value="TRANSMEMBRANE 4 L6 FAMILY MEMBER 1-RELATED"/>
    <property type="match status" value="1"/>
</dbReference>
<dbReference type="PANTHER" id="PTHR14198:SF4">
    <property type="entry name" value="TRANSMEMBRANE 4 L6 FAMILY MEMBER 5"/>
    <property type="match status" value="1"/>
</dbReference>
<dbReference type="Pfam" id="PF05805">
    <property type="entry name" value="L6_membrane"/>
    <property type="match status" value="1"/>
</dbReference>
<reference key="1">
    <citation type="journal article" date="1998" name="Gene">
        <title>Identification of a new tumour-associated antigen TM4SF5 and its expression in human cancer.</title>
        <authorList>
            <person name="Mueller-Pillasch F."/>
            <person name="Wallrapp C."/>
            <person name="Lacher U."/>
            <person name="Friess H."/>
            <person name="Buchler M."/>
            <person name="Adler G."/>
            <person name="Gress T.M."/>
        </authorList>
    </citation>
    <scope>NUCLEOTIDE SEQUENCE [MRNA]</scope>
</reference>
<reference key="2">
    <citation type="submission" date="2004-06" db="EMBL/GenBank/DDBJ databases">
        <title>Cloning of human full open reading frames in Gateway(TM) system entry vector (pDONR201).</title>
        <authorList>
            <person name="Ebert L."/>
            <person name="Schick M."/>
            <person name="Neubert P."/>
            <person name="Schatten R."/>
            <person name="Henze S."/>
            <person name="Korn B."/>
        </authorList>
    </citation>
    <scope>NUCLEOTIDE SEQUENCE [LARGE SCALE MRNA]</scope>
</reference>
<reference key="3">
    <citation type="journal article" date="2004" name="Genome Res.">
        <title>The status, quality, and expansion of the NIH full-length cDNA project: the Mammalian Gene Collection (MGC).</title>
        <authorList>
            <consortium name="The MGC Project Team"/>
        </authorList>
    </citation>
    <scope>NUCLEOTIDE SEQUENCE [LARGE SCALE MRNA]</scope>
    <source>
        <tissue>Liver</tissue>
    </source>
</reference>
<reference key="4">
    <citation type="journal article" date="2010" name="Biochim. Biophys. Acta">
        <title>TM4SF5 accelerates G1/S phase progression via cytosolic p27Kip1 expression and RhoA activity.</title>
        <authorList>
            <person name="Kim H."/>
            <person name="Kang M."/>
            <person name="Lee S.A."/>
            <person name="Kwak T.K."/>
            <person name="Jung O."/>
            <person name="Lee H.J."/>
            <person name="Kim S.H."/>
            <person name="Lee J.W."/>
        </authorList>
    </citation>
    <scope>FUNCTION</scope>
</reference>
<reference key="5">
    <citation type="journal article" date="2019" name="Cell Metab.">
        <title>Transmembrane 4 L six family member 5 senses arginine for mTORC1 signaling.</title>
        <authorList>
            <person name="Jung J.W."/>
            <person name="Macalino S.J.Y."/>
            <person name="Cui M."/>
            <person name="Kim J.E."/>
            <person name="Kim H.J."/>
            <person name="Song D.G."/>
            <person name="Nam S.H."/>
            <person name="Kim S."/>
            <person name="Choi S."/>
            <person name="Lee J.W."/>
        </authorList>
    </citation>
    <scope>FUNCTION</scope>
    <scope>SUBCELLULAR LOCATION</scope>
    <scope>INTERACTION WITH MTOR; SLC38A9; CASTOR1 AND SLC7A1</scope>
    <scope>ARGININE-BINDING</scope>
    <scope>MUTAGENESIS OF TRP-124; GLY-125; TYR-126; HIS-127; PHE-128 AND GLU-129</scope>
</reference>
<keyword id="KW-0131">Cell cycle</keyword>
<keyword id="KW-1003">Cell membrane</keyword>
<keyword id="KW-0325">Glycoprotein</keyword>
<keyword id="KW-0458">Lysosome</keyword>
<keyword id="KW-0472">Membrane</keyword>
<keyword id="KW-1267">Proteomics identification</keyword>
<keyword id="KW-1185">Reference proteome</keyword>
<keyword id="KW-0812">Transmembrane</keyword>
<keyword id="KW-1133">Transmembrane helix</keyword>
<accession>O14894</accession>
<accession>Q17RW9</accession>
<accession>Q6IB79</accession>
<sequence length="197" mass="20823">MCTGKCARCVGLSLITLCLVCIVANALLLVPNGETSWTNTNHLSLQVWLMGGFIGGGLMVLCPGIAAVRAGGKGCCGAGCCGNRCRMLRSVFSSAFGVLGAIYCLSVSGAGLRNGPRCLMNGEWGYHFEDTAGAYLLNRTLWDRCEAPPRVVPWNVTLFSLLVAASCLEIVLCGIQLVNATIGVFCGDCRKKQDTPH</sequence>
<comment type="function">
    <text evidence="2 3">Acts as a lysosomal membrane arginine sensor (PubMed:30956113). Forms a complex with MTOR and SLC38A9 on lysosomal membranes in an arginine-regulated manner, leading to arginine efflux which enables the activation of mTORC1 which subsequently leads to RPS6KB1 and EIF4EBP1 phosphorylations (PubMed:30956113). Facilitates cell cycle G1/S phase progression and the translocation of the CDK4-CCND1 complex into the nucleus (PubMed:20399237). CDKN1B and RHOA/ROCK signaling activity are involved in TM4SF5-mediated acceleration of G1/S phase progression (PubMed:20399237).</text>
</comment>
<comment type="subunit">
    <text evidence="3">Interacts with MTOR; the interaction is positively regulated by arginine and is negatively regulated by leucine (PubMed:30956113). Interacts with SLC38A9 (PubMed:30956113). Interacts with SLC7A1; the interaction is negatively regulated by arginine (PubMed:30956113). Interacts with CASTOR1; the interaction is positively regulated by leucine and is negatively regulated by arginine (PubMed:30956113).</text>
</comment>
<comment type="interaction">
    <interactant intactId="EBI-19125949">
        <id>O14894</id>
    </interactant>
    <interactant intactId="EBI-19125216">
        <id>Q86WK6</id>
        <label>AMIGO1</label>
    </interactant>
    <organismsDiffer>false</organismsDiffer>
    <experiments>3</experiments>
</comment>
<comment type="interaction">
    <interactant intactId="EBI-19125949">
        <id>O14894</id>
    </interactant>
    <interactant intactId="EBI-10276168">
        <id>Q8WTX7</id>
        <label>CASTOR1</label>
    </interactant>
    <organismsDiffer>false</organismsDiffer>
    <experiments>2</experiments>
</comment>
<comment type="interaction">
    <interactant intactId="EBI-19125949">
        <id>O14894</id>
    </interactant>
    <interactant intactId="EBI-359260">
        <id>P42345</id>
        <label>MTOR</label>
    </interactant>
    <organismsDiffer>false</organismsDiffer>
    <experiments>7</experiments>
</comment>
<comment type="interaction">
    <interactant intactId="EBI-19125949">
        <id>O14894</id>
    </interactant>
    <interactant intactId="EBI-9978316">
        <id>Q8NBW4</id>
        <label>SLC38A9</label>
    </interactant>
    <organismsDiffer>false</organismsDiffer>
    <experiments>4</experiments>
</comment>
<comment type="subcellular location">
    <subcellularLocation>
        <location evidence="3">Lysosome membrane</location>
        <topology evidence="1">Multi-pass membrane protein</topology>
    </subcellularLocation>
    <subcellularLocation>
        <location evidence="3">Cell membrane</location>
        <topology evidence="1">Multi-pass membrane protein</topology>
    </subcellularLocation>
    <text evidence="3">Localization to cell membrane increases during conditions of arginine depletion and translocation to lysosome membrane seen upon arginine repletion.</text>
</comment>
<comment type="tissue specificity">
    <text>Intestine. Overexpressed in pancreatic cancers.</text>
</comment>
<comment type="similarity">
    <text evidence="4">Belongs to the L6 tetraspanin family.</text>
</comment>
<name>T4S5_HUMAN</name>
<protein>
    <recommendedName>
        <fullName>Transmembrane 4 L6 family member 5</fullName>
    </recommendedName>
    <alternativeName>
        <fullName>Tetraspan transmembrane protein L6H</fullName>
    </alternativeName>
</protein>